<protein>
    <recommendedName>
        <fullName evidence="1">Chaperone protein TorD</fullName>
    </recommendedName>
</protein>
<keyword id="KW-0143">Chaperone</keyword>
<keyword id="KW-0963">Cytoplasm</keyword>
<keyword id="KW-1185">Reference proteome</keyword>
<proteinExistence type="inferred from homology"/>
<reference key="1">
    <citation type="journal article" date="2002" name="Nat. Biotechnol.">
        <title>Genome sequence of the dissimilatory metal ion-reducing bacterium Shewanella oneidensis.</title>
        <authorList>
            <person name="Heidelberg J.F."/>
            <person name="Paulsen I.T."/>
            <person name="Nelson K.E."/>
            <person name="Gaidos E.J."/>
            <person name="Nelson W.C."/>
            <person name="Read T.D."/>
            <person name="Eisen J.A."/>
            <person name="Seshadri R."/>
            <person name="Ward N.L."/>
            <person name="Methe B.A."/>
            <person name="Clayton R.A."/>
            <person name="Meyer T."/>
            <person name="Tsapin A."/>
            <person name="Scott J."/>
            <person name="Beanan M.J."/>
            <person name="Brinkac L.M."/>
            <person name="Daugherty S.C."/>
            <person name="DeBoy R.T."/>
            <person name="Dodson R.J."/>
            <person name="Durkin A.S."/>
            <person name="Haft D.H."/>
            <person name="Kolonay J.F."/>
            <person name="Madupu R."/>
            <person name="Peterson J.D."/>
            <person name="Umayam L.A."/>
            <person name="White O."/>
            <person name="Wolf A.M."/>
            <person name="Vamathevan J.J."/>
            <person name="Weidman J.F."/>
            <person name="Impraim M."/>
            <person name="Lee K."/>
            <person name="Berry K.J."/>
            <person name="Lee C."/>
            <person name="Mueller J."/>
            <person name="Khouri H.M."/>
            <person name="Gill J."/>
            <person name="Utterback T.R."/>
            <person name="McDonald L.A."/>
            <person name="Feldblyum T.V."/>
            <person name="Smith H.O."/>
            <person name="Venter J.C."/>
            <person name="Nealson K.H."/>
            <person name="Fraser C.M."/>
        </authorList>
    </citation>
    <scope>NUCLEOTIDE SEQUENCE [LARGE SCALE GENOMIC DNA]</scope>
    <source>
        <strain>ATCC 700550 / JCM 31522 / CIP 106686 / LMG 19005 / NCIMB 14063 / MR-1</strain>
    </source>
</reference>
<dbReference type="EMBL" id="AE014299">
    <property type="protein sequence ID" value="AAN54299.1"/>
    <property type="molecule type" value="Genomic_DNA"/>
</dbReference>
<dbReference type="RefSeq" id="NP_716854.1">
    <property type="nucleotide sequence ID" value="NC_004347.2"/>
</dbReference>
<dbReference type="RefSeq" id="WP_011071459.1">
    <property type="nucleotide sequence ID" value="NC_004347.2"/>
</dbReference>
<dbReference type="SMR" id="Q8EHJ0"/>
<dbReference type="STRING" id="211586.SO_1231"/>
<dbReference type="PaxDb" id="211586-SO_1231"/>
<dbReference type="KEGG" id="son:SO_1231"/>
<dbReference type="PATRIC" id="fig|211586.12.peg.1182"/>
<dbReference type="eggNOG" id="COG3381">
    <property type="taxonomic scope" value="Bacteria"/>
</dbReference>
<dbReference type="HOGENOM" id="CLU_077650_4_0_6"/>
<dbReference type="OrthoDB" id="7849731at2"/>
<dbReference type="PhylomeDB" id="Q8EHJ0"/>
<dbReference type="BioCyc" id="SONE211586:G1GMP-1141-MONOMER"/>
<dbReference type="Proteomes" id="UP000008186">
    <property type="component" value="Chromosome"/>
</dbReference>
<dbReference type="GO" id="GO:0005737">
    <property type="term" value="C:cytoplasm"/>
    <property type="evidence" value="ECO:0000318"/>
    <property type="project" value="GO_Central"/>
</dbReference>
<dbReference type="GO" id="GO:0051259">
    <property type="term" value="P:protein complex oligomerization"/>
    <property type="evidence" value="ECO:0007669"/>
    <property type="project" value="InterPro"/>
</dbReference>
<dbReference type="GO" id="GO:0006457">
    <property type="term" value="P:protein folding"/>
    <property type="evidence" value="ECO:0007669"/>
    <property type="project" value="UniProtKB-UniRule"/>
</dbReference>
<dbReference type="GO" id="GO:0051604">
    <property type="term" value="P:protein maturation"/>
    <property type="evidence" value="ECO:0000318"/>
    <property type="project" value="GO_Central"/>
</dbReference>
<dbReference type="Gene3D" id="1.20.120.1820">
    <property type="match status" value="1"/>
</dbReference>
<dbReference type="Gene3D" id="1.20.1280.20">
    <property type="entry name" value="HscB, C-terminal domain"/>
    <property type="match status" value="1"/>
</dbReference>
<dbReference type="HAMAP" id="MF_01150">
    <property type="entry name" value="TorD"/>
    <property type="match status" value="1"/>
</dbReference>
<dbReference type="InterPro" id="IPR023069">
    <property type="entry name" value="Chaperone_TorD"/>
</dbReference>
<dbReference type="InterPro" id="IPR020945">
    <property type="entry name" value="DMSO/NO3_reduct_chaperone"/>
</dbReference>
<dbReference type="InterPro" id="IPR036386">
    <property type="entry name" value="HscB_C_sf"/>
</dbReference>
<dbReference type="InterPro" id="IPR036411">
    <property type="entry name" value="TorD-like_sf"/>
</dbReference>
<dbReference type="InterPro" id="IPR050289">
    <property type="entry name" value="TorD/DmsD_chaperones"/>
</dbReference>
<dbReference type="NCBIfam" id="NF003442">
    <property type="entry name" value="PRK04976.1"/>
    <property type="match status" value="1"/>
</dbReference>
<dbReference type="PANTHER" id="PTHR34227:SF11">
    <property type="entry name" value="CHAPERONE PROTEIN TORD"/>
    <property type="match status" value="1"/>
</dbReference>
<dbReference type="PANTHER" id="PTHR34227">
    <property type="entry name" value="CHAPERONE PROTEIN YCDY"/>
    <property type="match status" value="1"/>
</dbReference>
<dbReference type="Pfam" id="PF02613">
    <property type="entry name" value="Nitrate_red_del"/>
    <property type="match status" value="1"/>
</dbReference>
<dbReference type="SUPFAM" id="SSF89155">
    <property type="entry name" value="TorD-like"/>
    <property type="match status" value="1"/>
</dbReference>
<gene>
    <name evidence="1" type="primary">torD</name>
    <name type="ordered locus">SO_1231</name>
</gene>
<comment type="function">
    <text evidence="1">Involved in the biogenesis of TorA. Acts on TorA before the insertion of the molybdenum cofactor and, as a result, probably favors a conformation of the apoenzyme that is competent for acquiring the cofactor.</text>
</comment>
<comment type="subcellular location">
    <subcellularLocation>
        <location evidence="1">Cytoplasm</location>
    </subcellularLocation>
</comment>
<comment type="similarity">
    <text evidence="1">Belongs to the TorD/DmsD family. TorD subfamily.</text>
</comment>
<name>TORD_SHEON</name>
<sequence>MSNVDINHARALVYQLLSSLFAREVNAQRLQELTSDAAQQFWTQLGHEPEFSAPVATMQKVLNDLQRNDALLELAADYCGLFLVGTRHSASPYASLYLNSEDEPLLFGQQHQQMSEFLHQSKLQVQSHFPEPADHLAVMLAYMGHLACHSEDAAQLNFLDACIDSWLAKFVVKVVECDSKHRNGFYSALASLTLAWVKQDKQLLEQTINSSVEQTLS</sequence>
<evidence type="ECO:0000255" key="1">
    <source>
        <dbReference type="HAMAP-Rule" id="MF_01150"/>
    </source>
</evidence>
<organism>
    <name type="scientific">Shewanella oneidensis (strain ATCC 700550 / JCM 31522 / CIP 106686 / LMG 19005 / NCIMB 14063 / MR-1)</name>
    <dbReference type="NCBI Taxonomy" id="211586"/>
    <lineage>
        <taxon>Bacteria</taxon>
        <taxon>Pseudomonadati</taxon>
        <taxon>Pseudomonadota</taxon>
        <taxon>Gammaproteobacteria</taxon>
        <taxon>Alteromonadales</taxon>
        <taxon>Shewanellaceae</taxon>
        <taxon>Shewanella</taxon>
    </lineage>
</organism>
<feature type="chain" id="PRO_0000211643" description="Chaperone protein TorD">
    <location>
        <begin position="1"/>
        <end position="217"/>
    </location>
</feature>
<accession>Q8EHJ0</accession>